<organism>
    <name type="scientific">Bordetella petrii (strain ATCC BAA-461 / DSM 12804 / CCUG 43448)</name>
    <dbReference type="NCBI Taxonomy" id="340100"/>
    <lineage>
        <taxon>Bacteria</taxon>
        <taxon>Pseudomonadati</taxon>
        <taxon>Pseudomonadota</taxon>
        <taxon>Betaproteobacteria</taxon>
        <taxon>Burkholderiales</taxon>
        <taxon>Alcaligenaceae</taxon>
        <taxon>Bordetella</taxon>
    </lineage>
</organism>
<feature type="chain" id="PRO_1000125902" description="Small ribosomal subunit protein uS7">
    <location>
        <begin position="1"/>
        <end position="156"/>
    </location>
</feature>
<accession>A9IJ08</accession>
<reference key="1">
    <citation type="journal article" date="2008" name="BMC Genomics">
        <title>The missing link: Bordetella petrii is endowed with both the metabolic versatility of environmental bacteria and virulence traits of pathogenic Bordetellae.</title>
        <authorList>
            <person name="Gross R."/>
            <person name="Guzman C.A."/>
            <person name="Sebaihia M."/>
            <person name="Martin dos Santos V.A.P."/>
            <person name="Pieper D.H."/>
            <person name="Koebnik R."/>
            <person name="Lechner M."/>
            <person name="Bartels D."/>
            <person name="Buhrmester J."/>
            <person name="Choudhuri J.V."/>
            <person name="Ebensen T."/>
            <person name="Gaigalat L."/>
            <person name="Herrmann S."/>
            <person name="Khachane A.N."/>
            <person name="Larisch C."/>
            <person name="Link S."/>
            <person name="Linke B."/>
            <person name="Meyer F."/>
            <person name="Mormann S."/>
            <person name="Nakunst D."/>
            <person name="Rueckert C."/>
            <person name="Schneiker-Bekel S."/>
            <person name="Schulze K."/>
            <person name="Voerholter F.-J."/>
            <person name="Yevsa T."/>
            <person name="Engle J.T."/>
            <person name="Goldman W.E."/>
            <person name="Puehler A."/>
            <person name="Goebel U.B."/>
            <person name="Goesmann A."/>
            <person name="Bloecker H."/>
            <person name="Kaiser O."/>
            <person name="Martinez-Arias R."/>
        </authorList>
    </citation>
    <scope>NUCLEOTIDE SEQUENCE [LARGE SCALE GENOMIC DNA]</scope>
    <source>
        <strain>ATCC BAA-461 / DSM 12804 / CCUG 43448</strain>
    </source>
</reference>
<evidence type="ECO:0000255" key="1">
    <source>
        <dbReference type="HAMAP-Rule" id="MF_00480"/>
    </source>
</evidence>
<evidence type="ECO:0000305" key="2"/>
<proteinExistence type="inferred from homology"/>
<protein>
    <recommendedName>
        <fullName evidence="1">Small ribosomal subunit protein uS7</fullName>
    </recommendedName>
    <alternativeName>
        <fullName evidence="2">30S ribosomal protein S7</fullName>
    </alternativeName>
</protein>
<comment type="function">
    <text evidence="1">One of the primary rRNA binding proteins, it binds directly to 16S rRNA where it nucleates assembly of the head domain of the 30S subunit. Is located at the subunit interface close to the decoding center, probably blocks exit of the E-site tRNA.</text>
</comment>
<comment type="subunit">
    <text evidence="1">Part of the 30S ribosomal subunit. Contacts proteins S9 and S11.</text>
</comment>
<comment type="similarity">
    <text evidence="1">Belongs to the universal ribosomal protein uS7 family.</text>
</comment>
<dbReference type="EMBL" id="AM902716">
    <property type="protein sequence ID" value="CAP45308.1"/>
    <property type="molecule type" value="Genomic_DNA"/>
</dbReference>
<dbReference type="SMR" id="A9IJ08"/>
<dbReference type="STRING" id="94624.Bpet4956"/>
<dbReference type="KEGG" id="bpt:Bpet4956"/>
<dbReference type="eggNOG" id="COG0049">
    <property type="taxonomic scope" value="Bacteria"/>
</dbReference>
<dbReference type="Proteomes" id="UP000001225">
    <property type="component" value="Chromosome"/>
</dbReference>
<dbReference type="GO" id="GO:0015935">
    <property type="term" value="C:small ribosomal subunit"/>
    <property type="evidence" value="ECO:0007669"/>
    <property type="project" value="InterPro"/>
</dbReference>
<dbReference type="GO" id="GO:0019843">
    <property type="term" value="F:rRNA binding"/>
    <property type="evidence" value="ECO:0007669"/>
    <property type="project" value="UniProtKB-UniRule"/>
</dbReference>
<dbReference type="GO" id="GO:0003735">
    <property type="term" value="F:structural constituent of ribosome"/>
    <property type="evidence" value="ECO:0007669"/>
    <property type="project" value="InterPro"/>
</dbReference>
<dbReference type="GO" id="GO:0000049">
    <property type="term" value="F:tRNA binding"/>
    <property type="evidence" value="ECO:0007669"/>
    <property type="project" value="UniProtKB-UniRule"/>
</dbReference>
<dbReference type="GO" id="GO:0006412">
    <property type="term" value="P:translation"/>
    <property type="evidence" value="ECO:0007669"/>
    <property type="project" value="UniProtKB-UniRule"/>
</dbReference>
<dbReference type="CDD" id="cd14869">
    <property type="entry name" value="uS7_Bacteria"/>
    <property type="match status" value="1"/>
</dbReference>
<dbReference type="FunFam" id="1.10.455.10:FF:000001">
    <property type="entry name" value="30S ribosomal protein S7"/>
    <property type="match status" value="1"/>
</dbReference>
<dbReference type="Gene3D" id="1.10.455.10">
    <property type="entry name" value="Ribosomal protein S7 domain"/>
    <property type="match status" value="1"/>
</dbReference>
<dbReference type="HAMAP" id="MF_00480_B">
    <property type="entry name" value="Ribosomal_uS7_B"/>
    <property type="match status" value="1"/>
</dbReference>
<dbReference type="InterPro" id="IPR000235">
    <property type="entry name" value="Ribosomal_uS7"/>
</dbReference>
<dbReference type="InterPro" id="IPR005717">
    <property type="entry name" value="Ribosomal_uS7_bac/org-type"/>
</dbReference>
<dbReference type="InterPro" id="IPR020606">
    <property type="entry name" value="Ribosomal_uS7_CS"/>
</dbReference>
<dbReference type="InterPro" id="IPR023798">
    <property type="entry name" value="Ribosomal_uS7_dom"/>
</dbReference>
<dbReference type="InterPro" id="IPR036823">
    <property type="entry name" value="Ribosomal_uS7_dom_sf"/>
</dbReference>
<dbReference type="NCBIfam" id="TIGR01029">
    <property type="entry name" value="rpsG_bact"/>
    <property type="match status" value="1"/>
</dbReference>
<dbReference type="PANTHER" id="PTHR11205">
    <property type="entry name" value="RIBOSOMAL PROTEIN S7"/>
    <property type="match status" value="1"/>
</dbReference>
<dbReference type="Pfam" id="PF00177">
    <property type="entry name" value="Ribosomal_S7"/>
    <property type="match status" value="1"/>
</dbReference>
<dbReference type="PIRSF" id="PIRSF002122">
    <property type="entry name" value="RPS7p_RPS7a_RPS5e_RPS7o"/>
    <property type="match status" value="1"/>
</dbReference>
<dbReference type="SUPFAM" id="SSF47973">
    <property type="entry name" value="Ribosomal protein S7"/>
    <property type="match status" value="1"/>
</dbReference>
<dbReference type="PROSITE" id="PS00052">
    <property type="entry name" value="RIBOSOMAL_S7"/>
    <property type="match status" value="1"/>
</dbReference>
<keyword id="KW-0687">Ribonucleoprotein</keyword>
<keyword id="KW-0689">Ribosomal protein</keyword>
<keyword id="KW-0694">RNA-binding</keyword>
<keyword id="KW-0699">rRNA-binding</keyword>
<keyword id="KW-0820">tRNA-binding</keyword>
<gene>
    <name evidence="1" type="primary">rpsG</name>
    <name type="ordered locus">Bpet4956</name>
</gene>
<sequence length="156" mass="17694">MPRRREVPKREILPDPKFGSVELAKFMNVVMLDGKKAVAERIVYGALEQVQAKTGKEPIEVFSLAINNIKPIVEVKSRRVGGANYQVPVEVRPVRRLALAMRWLREAAKKRGEKSMDLRLAGELIDASEGRGAAMKKREDTHKMAEANKAFSHFRW</sequence>
<name>RS7_BORPD</name>